<reference key="1">
    <citation type="submission" date="2009-07" db="EMBL/GenBank/DDBJ databases">
        <title>Complete sequence of Pectobacterium carotovorum subsp. carotovorum PC1.</title>
        <authorList>
            <consortium name="US DOE Joint Genome Institute"/>
            <person name="Lucas S."/>
            <person name="Copeland A."/>
            <person name="Lapidus A."/>
            <person name="Glavina del Rio T."/>
            <person name="Tice H."/>
            <person name="Bruce D."/>
            <person name="Goodwin L."/>
            <person name="Pitluck S."/>
            <person name="Munk A.C."/>
            <person name="Brettin T."/>
            <person name="Detter J.C."/>
            <person name="Han C."/>
            <person name="Tapia R."/>
            <person name="Larimer F."/>
            <person name="Land M."/>
            <person name="Hauser L."/>
            <person name="Kyrpides N."/>
            <person name="Mikhailova N."/>
            <person name="Balakrishnan V."/>
            <person name="Glasner J."/>
            <person name="Perna N.T."/>
        </authorList>
    </citation>
    <scope>NUCLEOTIDE SEQUENCE [LARGE SCALE GENOMIC DNA]</scope>
    <source>
        <strain>PC1</strain>
    </source>
</reference>
<comment type="function">
    <text evidence="1">Binds directly to 23S rRNA. The L1 stalk is quite mobile in the ribosome, and is involved in E site tRNA release.</text>
</comment>
<comment type="function">
    <text evidence="1">Protein L1 is also a translational repressor protein, it controls the translation of the L11 operon by binding to its mRNA.</text>
</comment>
<comment type="subunit">
    <text evidence="1">Part of the 50S ribosomal subunit.</text>
</comment>
<comment type="similarity">
    <text evidence="1">Belongs to the universal ribosomal protein uL1 family.</text>
</comment>
<feature type="chain" id="PRO_1000214428" description="Large ribosomal subunit protein uL1">
    <location>
        <begin position="1"/>
        <end position="234"/>
    </location>
</feature>
<sequence length="234" mass="24707">MAKLTKRMRVIRDKVDVTKQYDINEAVALLKELATAKFVESVDVAVNLGIDARKSDQNVRGATVLPHGTGRSVRVAVFTQGANAEAAKAAGAEFVGMEDLAEQIKKGEMGFDVVIASPDAMRVVGQLGQVLGPRGLMPNPKVGTVTPNVAEAVNNAKAGQVRYRNDKNGIIHTTIGKVDFDSNKLKENLEALLVALKKAKPSQAKGVYIKKVSLSTTMGAGVAVDQSGLNAAAN</sequence>
<accession>C6DHR2</accession>
<proteinExistence type="inferred from homology"/>
<gene>
    <name evidence="1" type="primary">rplA</name>
    <name type="ordered locus">PC1_0202</name>
</gene>
<protein>
    <recommendedName>
        <fullName evidence="1">Large ribosomal subunit protein uL1</fullName>
    </recommendedName>
    <alternativeName>
        <fullName evidence="2">50S ribosomal protein L1</fullName>
    </alternativeName>
</protein>
<organism>
    <name type="scientific">Pectobacterium carotovorum subsp. carotovorum (strain PC1)</name>
    <dbReference type="NCBI Taxonomy" id="561230"/>
    <lineage>
        <taxon>Bacteria</taxon>
        <taxon>Pseudomonadati</taxon>
        <taxon>Pseudomonadota</taxon>
        <taxon>Gammaproteobacteria</taxon>
        <taxon>Enterobacterales</taxon>
        <taxon>Pectobacteriaceae</taxon>
        <taxon>Pectobacterium</taxon>
    </lineage>
</organism>
<evidence type="ECO:0000255" key="1">
    <source>
        <dbReference type="HAMAP-Rule" id="MF_01318"/>
    </source>
</evidence>
<evidence type="ECO:0000305" key="2"/>
<dbReference type="EMBL" id="CP001657">
    <property type="protein sequence ID" value="ACT11262.1"/>
    <property type="molecule type" value="Genomic_DNA"/>
</dbReference>
<dbReference type="RefSeq" id="WP_012772933.1">
    <property type="nucleotide sequence ID" value="NC_012917.1"/>
</dbReference>
<dbReference type="SMR" id="C6DHR2"/>
<dbReference type="STRING" id="561230.PC1_0202"/>
<dbReference type="GeneID" id="67796001"/>
<dbReference type="KEGG" id="pct:PC1_0202"/>
<dbReference type="eggNOG" id="COG0081">
    <property type="taxonomic scope" value="Bacteria"/>
</dbReference>
<dbReference type="HOGENOM" id="CLU_062853_0_0_6"/>
<dbReference type="OrthoDB" id="9803740at2"/>
<dbReference type="Proteomes" id="UP000002736">
    <property type="component" value="Chromosome"/>
</dbReference>
<dbReference type="GO" id="GO:0022625">
    <property type="term" value="C:cytosolic large ribosomal subunit"/>
    <property type="evidence" value="ECO:0007669"/>
    <property type="project" value="TreeGrafter"/>
</dbReference>
<dbReference type="GO" id="GO:0019843">
    <property type="term" value="F:rRNA binding"/>
    <property type="evidence" value="ECO:0007669"/>
    <property type="project" value="UniProtKB-UniRule"/>
</dbReference>
<dbReference type="GO" id="GO:0003735">
    <property type="term" value="F:structural constituent of ribosome"/>
    <property type="evidence" value="ECO:0007669"/>
    <property type="project" value="InterPro"/>
</dbReference>
<dbReference type="GO" id="GO:0000049">
    <property type="term" value="F:tRNA binding"/>
    <property type="evidence" value="ECO:0007669"/>
    <property type="project" value="UniProtKB-KW"/>
</dbReference>
<dbReference type="GO" id="GO:0006417">
    <property type="term" value="P:regulation of translation"/>
    <property type="evidence" value="ECO:0007669"/>
    <property type="project" value="UniProtKB-KW"/>
</dbReference>
<dbReference type="GO" id="GO:0006412">
    <property type="term" value="P:translation"/>
    <property type="evidence" value="ECO:0007669"/>
    <property type="project" value="UniProtKB-UniRule"/>
</dbReference>
<dbReference type="CDD" id="cd00403">
    <property type="entry name" value="Ribosomal_L1"/>
    <property type="match status" value="1"/>
</dbReference>
<dbReference type="FunFam" id="3.40.50.790:FF:000001">
    <property type="entry name" value="50S ribosomal protein L1"/>
    <property type="match status" value="1"/>
</dbReference>
<dbReference type="Gene3D" id="3.30.190.20">
    <property type="match status" value="1"/>
</dbReference>
<dbReference type="Gene3D" id="3.40.50.790">
    <property type="match status" value="1"/>
</dbReference>
<dbReference type="HAMAP" id="MF_01318_B">
    <property type="entry name" value="Ribosomal_uL1_B"/>
    <property type="match status" value="1"/>
</dbReference>
<dbReference type="InterPro" id="IPR005878">
    <property type="entry name" value="Ribosom_uL1_bac-type"/>
</dbReference>
<dbReference type="InterPro" id="IPR002143">
    <property type="entry name" value="Ribosomal_uL1"/>
</dbReference>
<dbReference type="InterPro" id="IPR023674">
    <property type="entry name" value="Ribosomal_uL1-like"/>
</dbReference>
<dbReference type="InterPro" id="IPR028364">
    <property type="entry name" value="Ribosomal_uL1/biogenesis"/>
</dbReference>
<dbReference type="InterPro" id="IPR016095">
    <property type="entry name" value="Ribosomal_uL1_3-a/b-sand"/>
</dbReference>
<dbReference type="InterPro" id="IPR023673">
    <property type="entry name" value="Ribosomal_uL1_CS"/>
</dbReference>
<dbReference type="NCBIfam" id="TIGR01169">
    <property type="entry name" value="rplA_bact"/>
    <property type="match status" value="1"/>
</dbReference>
<dbReference type="PANTHER" id="PTHR36427">
    <property type="entry name" value="54S RIBOSOMAL PROTEIN L1, MITOCHONDRIAL"/>
    <property type="match status" value="1"/>
</dbReference>
<dbReference type="PANTHER" id="PTHR36427:SF3">
    <property type="entry name" value="LARGE RIBOSOMAL SUBUNIT PROTEIN UL1M"/>
    <property type="match status" value="1"/>
</dbReference>
<dbReference type="Pfam" id="PF00687">
    <property type="entry name" value="Ribosomal_L1"/>
    <property type="match status" value="1"/>
</dbReference>
<dbReference type="PIRSF" id="PIRSF002155">
    <property type="entry name" value="Ribosomal_L1"/>
    <property type="match status" value="1"/>
</dbReference>
<dbReference type="SUPFAM" id="SSF56808">
    <property type="entry name" value="Ribosomal protein L1"/>
    <property type="match status" value="1"/>
</dbReference>
<dbReference type="PROSITE" id="PS01199">
    <property type="entry name" value="RIBOSOMAL_L1"/>
    <property type="match status" value="1"/>
</dbReference>
<keyword id="KW-0678">Repressor</keyword>
<keyword id="KW-0687">Ribonucleoprotein</keyword>
<keyword id="KW-0689">Ribosomal protein</keyword>
<keyword id="KW-0694">RNA-binding</keyword>
<keyword id="KW-0699">rRNA-binding</keyword>
<keyword id="KW-0810">Translation regulation</keyword>
<keyword id="KW-0820">tRNA-binding</keyword>
<name>RL1_PECCP</name>